<keyword id="KW-0004">4Fe-4S</keyword>
<keyword id="KW-0997">Cell inner membrane</keyword>
<keyword id="KW-1003">Cell membrane</keyword>
<keyword id="KW-0249">Electron transport</keyword>
<keyword id="KW-0408">Iron</keyword>
<keyword id="KW-0411">Iron-sulfur</keyword>
<keyword id="KW-0472">Membrane</keyword>
<keyword id="KW-0479">Metal-binding</keyword>
<keyword id="KW-0677">Repeat</keyword>
<keyword id="KW-1278">Translocase</keyword>
<keyword id="KW-0813">Transport</keyword>
<feature type="chain" id="PRO_1000194470" description="Ion-translocating oxidoreductase complex subunit B">
    <location>
        <begin position="1"/>
        <end position="194"/>
    </location>
</feature>
<feature type="domain" description="4Fe-4S" evidence="1">
    <location>
        <begin position="32"/>
        <end position="90"/>
    </location>
</feature>
<feature type="domain" description="4Fe-4S ferredoxin-type 1" evidence="1">
    <location>
        <begin position="105"/>
        <end position="134"/>
    </location>
</feature>
<feature type="domain" description="4Fe-4S ferredoxin-type 2" evidence="1">
    <location>
        <begin position="135"/>
        <end position="164"/>
    </location>
</feature>
<feature type="region of interest" description="Hydrophobic" evidence="1">
    <location>
        <begin position="1"/>
        <end position="26"/>
    </location>
</feature>
<feature type="binding site" evidence="1">
    <location>
        <position position="49"/>
    </location>
    <ligand>
        <name>[4Fe-4S] cluster</name>
        <dbReference type="ChEBI" id="CHEBI:49883"/>
        <label>1</label>
    </ligand>
</feature>
<feature type="binding site" evidence="1">
    <location>
        <position position="52"/>
    </location>
    <ligand>
        <name>[4Fe-4S] cluster</name>
        <dbReference type="ChEBI" id="CHEBI:49883"/>
        <label>1</label>
    </ligand>
</feature>
<feature type="binding site" evidence="1">
    <location>
        <position position="57"/>
    </location>
    <ligand>
        <name>[4Fe-4S] cluster</name>
        <dbReference type="ChEBI" id="CHEBI:49883"/>
        <label>1</label>
    </ligand>
</feature>
<feature type="binding site" evidence="1">
    <location>
        <position position="73"/>
    </location>
    <ligand>
        <name>[4Fe-4S] cluster</name>
        <dbReference type="ChEBI" id="CHEBI:49883"/>
        <label>1</label>
    </ligand>
</feature>
<feature type="binding site" evidence="1">
    <location>
        <position position="114"/>
    </location>
    <ligand>
        <name>[4Fe-4S] cluster</name>
        <dbReference type="ChEBI" id="CHEBI:49883"/>
        <label>2</label>
    </ligand>
</feature>
<feature type="binding site" evidence="1">
    <location>
        <position position="117"/>
    </location>
    <ligand>
        <name>[4Fe-4S] cluster</name>
        <dbReference type="ChEBI" id="CHEBI:49883"/>
        <label>2</label>
    </ligand>
</feature>
<feature type="binding site" evidence="1">
    <location>
        <position position="120"/>
    </location>
    <ligand>
        <name>[4Fe-4S] cluster</name>
        <dbReference type="ChEBI" id="CHEBI:49883"/>
        <label>2</label>
    </ligand>
</feature>
<feature type="binding site" evidence="1">
    <location>
        <position position="124"/>
    </location>
    <ligand>
        <name>[4Fe-4S] cluster</name>
        <dbReference type="ChEBI" id="CHEBI:49883"/>
        <label>3</label>
    </ligand>
</feature>
<feature type="binding site" evidence="1">
    <location>
        <position position="144"/>
    </location>
    <ligand>
        <name>[4Fe-4S] cluster</name>
        <dbReference type="ChEBI" id="CHEBI:49883"/>
        <label>3</label>
    </ligand>
</feature>
<feature type="binding site" evidence="1">
    <location>
        <position position="147"/>
    </location>
    <ligand>
        <name>[4Fe-4S] cluster</name>
        <dbReference type="ChEBI" id="CHEBI:49883"/>
        <label>3</label>
    </ligand>
</feature>
<feature type="binding site" evidence="1">
    <location>
        <position position="150"/>
    </location>
    <ligand>
        <name>[4Fe-4S] cluster</name>
        <dbReference type="ChEBI" id="CHEBI:49883"/>
        <label>3</label>
    </ligand>
</feature>
<feature type="binding site" evidence="1">
    <location>
        <position position="154"/>
    </location>
    <ligand>
        <name>[4Fe-4S] cluster</name>
        <dbReference type="ChEBI" id="CHEBI:49883"/>
        <label>2</label>
    </ligand>
</feature>
<evidence type="ECO:0000255" key="1">
    <source>
        <dbReference type="HAMAP-Rule" id="MF_00463"/>
    </source>
</evidence>
<sequence length="194" mass="20501">MSSILIAVIAISALALVFGLILGFASIKFKVESDPIVDQIDSILPQTQCGQCGYPGCKPYAEAIANGDTINKCPPGGQATIEKLADLMGVDIPSSAHDEEKSIKKIAFIHEDMCIGCTKCIQACPVDAIVGGTKALHTVIEAECTGCDLCVAPCPTDCIEMIPVNTTPDNWKWDLNTIPVVNLPADKPTKASEL</sequence>
<protein>
    <recommendedName>
        <fullName evidence="1">Ion-translocating oxidoreductase complex subunit B</fullName>
        <ecNumber evidence="1">7.-.-.-</ecNumber>
    </recommendedName>
    <alternativeName>
        <fullName evidence="1">Rnf electron transport complex subunit B</fullName>
    </alternativeName>
</protein>
<dbReference type="EC" id="7.-.-.-" evidence="1"/>
<dbReference type="EMBL" id="FM178379">
    <property type="protein sequence ID" value="CAQ79556.1"/>
    <property type="molecule type" value="Genomic_DNA"/>
</dbReference>
<dbReference type="KEGG" id="vsa:VSAL_I1871"/>
<dbReference type="eggNOG" id="COG2878">
    <property type="taxonomic scope" value="Bacteria"/>
</dbReference>
<dbReference type="HOGENOM" id="CLU_063448_2_0_6"/>
<dbReference type="Proteomes" id="UP000001730">
    <property type="component" value="Chromosome 1"/>
</dbReference>
<dbReference type="GO" id="GO:0005886">
    <property type="term" value="C:plasma membrane"/>
    <property type="evidence" value="ECO:0007669"/>
    <property type="project" value="UniProtKB-SubCell"/>
</dbReference>
<dbReference type="GO" id="GO:0051539">
    <property type="term" value="F:4 iron, 4 sulfur cluster binding"/>
    <property type="evidence" value="ECO:0007669"/>
    <property type="project" value="UniProtKB-UniRule"/>
</dbReference>
<dbReference type="GO" id="GO:0009055">
    <property type="term" value="F:electron transfer activity"/>
    <property type="evidence" value="ECO:0007669"/>
    <property type="project" value="InterPro"/>
</dbReference>
<dbReference type="GO" id="GO:0046872">
    <property type="term" value="F:metal ion binding"/>
    <property type="evidence" value="ECO:0007669"/>
    <property type="project" value="UniProtKB-KW"/>
</dbReference>
<dbReference type="GO" id="GO:0022900">
    <property type="term" value="P:electron transport chain"/>
    <property type="evidence" value="ECO:0007669"/>
    <property type="project" value="UniProtKB-UniRule"/>
</dbReference>
<dbReference type="FunFam" id="1.10.15.40:FF:000001">
    <property type="entry name" value="Ion-translocating oxidoreductase complex subunit B"/>
    <property type="match status" value="1"/>
</dbReference>
<dbReference type="Gene3D" id="3.30.70.20">
    <property type="match status" value="2"/>
</dbReference>
<dbReference type="Gene3D" id="1.10.15.40">
    <property type="entry name" value="Electron transport complex subunit B, putative Fe-S cluster"/>
    <property type="match status" value="1"/>
</dbReference>
<dbReference type="HAMAP" id="MF_00463">
    <property type="entry name" value="RsxB_RnfB"/>
    <property type="match status" value="1"/>
</dbReference>
<dbReference type="InterPro" id="IPR007202">
    <property type="entry name" value="4Fe-4S_dom"/>
</dbReference>
<dbReference type="InterPro" id="IPR017896">
    <property type="entry name" value="4Fe4S_Fe-S-bd"/>
</dbReference>
<dbReference type="InterPro" id="IPR017900">
    <property type="entry name" value="4Fe4S_Fe_S_CS"/>
</dbReference>
<dbReference type="InterPro" id="IPR010207">
    <property type="entry name" value="Elect_transpt_cplx_RnfB/RsxB"/>
</dbReference>
<dbReference type="InterPro" id="IPR016463">
    <property type="entry name" value="RnfB/RsxB_Proteobac"/>
</dbReference>
<dbReference type="InterPro" id="IPR050294">
    <property type="entry name" value="RnfB_subfamily"/>
</dbReference>
<dbReference type="NCBIfam" id="NF003475">
    <property type="entry name" value="PRK05113.1"/>
    <property type="match status" value="1"/>
</dbReference>
<dbReference type="NCBIfam" id="TIGR01944">
    <property type="entry name" value="rnfB"/>
    <property type="match status" value="1"/>
</dbReference>
<dbReference type="PANTHER" id="PTHR42859:SF3">
    <property type="entry name" value="ION-TRANSLOCATING OXIDOREDUCTASE COMPLEX SUBUNIT B"/>
    <property type="match status" value="1"/>
</dbReference>
<dbReference type="PANTHER" id="PTHR42859">
    <property type="entry name" value="OXIDOREDUCTASE"/>
    <property type="match status" value="1"/>
</dbReference>
<dbReference type="Pfam" id="PF14697">
    <property type="entry name" value="Fer4_21"/>
    <property type="match status" value="1"/>
</dbReference>
<dbReference type="Pfam" id="PF04060">
    <property type="entry name" value="FeS"/>
    <property type="match status" value="1"/>
</dbReference>
<dbReference type="PIRSF" id="PIRSF005784">
    <property type="entry name" value="Elect_transpt_RnfB"/>
    <property type="match status" value="1"/>
</dbReference>
<dbReference type="SUPFAM" id="SSF54862">
    <property type="entry name" value="4Fe-4S ferredoxins"/>
    <property type="match status" value="1"/>
</dbReference>
<dbReference type="PROSITE" id="PS51656">
    <property type="entry name" value="4FE4S"/>
    <property type="match status" value="1"/>
</dbReference>
<dbReference type="PROSITE" id="PS00198">
    <property type="entry name" value="4FE4S_FER_1"/>
    <property type="match status" value="2"/>
</dbReference>
<dbReference type="PROSITE" id="PS51379">
    <property type="entry name" value="4FE4S_FER_2"/>
    <property type="match status" value="2"/>
</dbReference>
<proteinExistence type="inferred from homology"/>
<name>RNFB_ALISL</name>
<reference key="1">
    <citation type="journal article" date="2008" name="BMC Genomics">
        <title>The genome sequence of the fish pathogen Aliivibrio salmonicida strain LFI1238 shows extensive evidence of gene decay.</title>
        <authorList>
            <person name="Hjerde E."/>
            <person name="Lorentzen M.S."/>
            <person name="Holden M.T."/>
            <person name="Seeger K."/>
            <person name="Paulsen S."/>
            <person name="Bason N."/>
            <person name="Churcher C."/>
            <person name="Harris D."/>
            <person name="Norbertczak H."/>
            <person name="Quail M.A."/>
            <person name="Sanders S."/>
            <person name="Thurston S."/>
            <person name="Parkhill J."/>
            <person name="Willassen N.P."/>
            <person name="Thomson N.R."/>
        </authorList>
    </citation>
    <scope>NUCLEOTIDE SEQUENCE [LARGE SCALE GENOMIC DNA]</scope>
    <source>
        <strain>LFI1238</strain>
    </source>
</reference>
<organism>
    <name type="scientific">Aliivibrio salmonicida (strain LFI1238)</name>
    <name type="common">Vibrio salmonicida (strain LFI1238)</name>
    <dbReference type="NCBI Taxonomy" id="316275"/>
    <lineage>
        <taxon>Bacteria</taxon>
        <taxon>Pseudomonadati</taxon>
        <taxon>Pseudomonadota</taxon>
        <taxon>Gammaproteobacteria</taxon>
        <taxon>Vibrionales</taxon>
        <taxon>Vibrionaceae</taxon>
        <taxon>Aliivibrio</taxon>
    </lineage>
</organism>
<accession>B6EGH6</accession>
<gene>
    <name evidence="1" type="primary">rnfB</name>
    <name type="ordered locus">VSAL_I1871</name>
</gene>
<comment type="function">
    <text evidence="1">Part of a membrane-bound complex that couples electron transfer with translocation of ions across the membrane.</text>
</comment>
<comment type="cofactor">
    <cofactor evidence="1">
        <name>[4Fe-4S] cluster</name>
        <dbReference type="ChEBI" id="CHEBI:49883"/>
    </cofactor>
    <text evidence="1">Binds 3 [4Fe-4S] clusters.</text>
</comment>
<comment type="subunit">
    <text evidence="1">The complex is composed of six subunits: RnfA, RnfB, RnfC, RnfD, RnfE and RnfG.</text>
</comment>
<comment type="subcellular location">
    <subcellularLocation>
        <location evidence="1">Cell inner membrane</location>
    </subcellularLocation>
</comment>
<comment type="similarity">
    <text evidence="1">Belongs to the 4Fe4S bacterial-type ferredoxin family. RnfB subfamily.</text>
</comment>